<feature type="chain" id="PRO_1000086424" description="Large ribosomal subunit protein uL3">
    <location>
        <begin position="1"/>
        <end position="210"/>
    </location>
</feature>
<feature type="region of interest" description="Disordered" evidence="2">
    <location>
        <begin position="123"/>
        <end position="144"/>
    </location>
</feature>
<organism>
    <name type="scientific">Alkaliphilus metalliredigens (strain QYMF)</name>
    <dbReference type="NCBI Taxonomy" id="293826"/>
    <lineage>
        <taxon>Bacteria</taxon>
        <taxon>Bacillati</taxon>
        <taxon>Bacillota</taxon>
        <taxon>Clostridia</taxon>
        <taxon>Peptostreptococcales</taxon>
        <taxon>Natronincolaceae</taxon>
        <taxon>Alkaliphilus</taxon>
    </lineage>
</organism>
<proteinExistence type="inferred from homology"/>
<comment type="function">
    <text evidence="1">One of the primary rRNA binding proteins, it binds directly near the 3'-end of the 23S rRNA, where it nucleates assembly of the 50S subunit.</text>
</comment>
<comment type="subunit">
    <text evidence="1">Part of the 50S ribosomal subunit. Forms a cluster with proteins L14 and L19.</text>
</comment>
<comment type="similarity">
    <text evidence="1">Belongs to the universal ribosomal protein uL3 family.</text>
</comment>
<keyword id="KW-1185">Reference proteome</keyword>
<keyword id="KW-0687">Ribonucleoprotein</keyword>
<keyword id="KW-0689">Ribosomal protein</keyword>
<keyword id="KW-0694">RNA-binding</keyword>
<keyword id="KW-0699">rRNA-binding</keyword>
<sequence>MKGLMGRKVGMTQIFNEDGIVTPVTVIEVAENVVTQIKSDETDGYNSVQVGYGEKKIKNTIKPLQGHFEKAGTTPKRTMKEFRVDSTEGFTAGQELKADLFQAGDKVDVTGISKGKGFQGVIKRHGQSRGPMAHGSRYHRRPGSMGASAYPGRVFKGKNLPGHMGNVQVTAQNLEIVRVDLEKNLLLIKGAVPGPKKGVLVIQTTVKQGK</sequence>
<protein>
    <recommendedName>
        <fullName evidence="1">Large ribosomal subunit protein uL3</fullName>
    </recommendedName>
    <alternativeName>
        <fullName evidence="3">50S ribosomal protein L3</fullName>
    </alternativeName>
</protein>
<accession>A6TWI2</accession>
<reference key="1">
    <citation type="journal article" date="2016" name="Genome Announc.">
        <title>Complete genome sequence of Alkaliphilus metalliredigens strain QYMF, an alkaliphilic and metal-reducing bacterium isolated from borax-contaminated leachate ponds.</title>
        <authorList>
            <person name="Hwang C."/>
            <person name="Copeland A."/>
            <person name="Lucas S."/>
            <person name="Lapidus A."/>
            <person name="Barry K."/>
            <person name="Detter J.C."/>
            <person name="Glavina Del Rio T."/>
            <person name="Hammon N."/>
            <person name="Israni S."/>
            <person name="Dalin E."/>
            <person name="Tice H."/>
            <person name="Pitluck S."/>
            <person name="Chertkov O."/>
            <person name="Brettin T."/>
            <person name="Bruce D."/>
            <person name="Han C."/>
            <person name="Schmutz J."/>
            <person name="Larimer F."/>
            <person name="Land M.L."/>
            <person name="Hauser L."/>
            <person name="Kyrpides N."/>
            <person name="Mikhailova N."/>
            <person name="Ye Q."/>
            <person name="Zhou J."/>
            <person name="Richardson P."/>
            <person name="Fields M.W."/>
        </authorList>
    </citation>
    <scope>NUCLEOTIDE SEQUENCE [LARGE SCALE GENOMIC DNA]</scope>
    <source>
        <strain>QYMF</strain>
    </source>
</reference>
<name>RL3_ALKMQ</name>
<gene>
    <name evidence="1" type="primary">rplC</name>
    <name type="ordered locus">Amet_4478</name>
</gene>
<evidence type="ECO:0000255" key="1">
    <source>
        <dbReference type="HAMAP-Rule" id="MF_01325"/>
    </source>
</evidence>
<evidence type="ECO:0000256" key="2">
    <source>
        <dbReference type="SAM" id="MobiDB-lite"/>
    </source>
</evidence>
<evidence type="ECO:0000305" key="3"/>
<dbReference type="EMBL" id="CP000724">
    <property type="protein sequence ID" value="ABR50550.1"/>
    <property type="molecule type" value="Genomic_DNA"/>
</dbReference>
<dbReference type="RefSeq" id="WP_012065441.1">
    <property type="nucleotide sequence ID" value="NC_009633.1"/>
</dbReference>
<dbReference type="SMR" id="A6TWI2"/>
<dbReference type="STRING" id="293826.Amet_4478"/>
<dbReference type="KEGG" id="amt:Amet_4478"/>
<dbReference type="eggNOG" id="COG0087">
    <property type="taxonomic scope" value="Bacteria"/>
</dbReference>
<dbReference type="HOGENOM" id="CLU_044142_4_1_9"/>
<dbReference type="OrthoDB" id="9806135at2"/>
<dbReference type="Proteomes" id="UP000001572">
    <property type="component" value="Chromosome"/>
</dbReference>
<dbReference type="GO" id="GO:0022625">
    <property type="term" value="C:cytosolic large ribosomal subunit"/>
    <property type="evidence" value="ECO:0007669"/>
    <property type="project" value="TreeGrafter"/>
</dbReference>
<dbReference type="GO" id="GO:0019843">
    <property type="term" value="F:rRNA binding"/>
    <property type="evidence" value="ECO:0007669"/>
    <property type="project" value="UniProtKB-UniRule"/>
</dbReference>
<dbReference type="GO" id="GO:0003735">
    <property type="term" value="F:structural constituent of ribosome"/>
    <property type="evidence" value="ECO:0007669"/>
    <property type="project" value="InterPro"/>
</dbReference>
<dbReference type="GO" id="GO:0006412">
    <property type="term" value="P:translation"/>
    <property type="evidence" value="ECO:0007669"/>
    <property type="project" value="UniProtKB-UniRule"/>
</dbReference>
<dbReference type="FunFam" id="2.40.30.10:FF:000004">
    <property type="entry name" value="50S ribosomal protein L3"/>
    <property type="match status" value="1"/>
</dbReference>
<dbReference type="FunFam" id="3.30.160.810:FF:000001">
    <property type="entry name" value="50S ribosomal protein L3"/>
    <property type="match status" value="1"/>
</dbReference>
<dbReference type="Gene3D" id="3.30.160.810">
    <property type="match status" value="1"/>
</dbReference>
<dbReference type="Gene3D" id="2.40.30.10">
    <property type="entry name" value="Translation factors"/>
    <property type="match status" value="1"/>
</dbReference>
<dbReference type="HAMAP" id="MF_01325_B">
    <property type="entry name" value="Ribosomal_uL3_B"/>
    <property type="match status" value="1"/>
</dbReference>
<dbReference type="InterPro" id="IPR000597">
    <property type="entry name" value="Ribosomal_uL3"/>
</dbReference>
<dbReference type="InterPro" id="IPR019927">
    <property type="entry name" value="Ribosomal_uL3_bac/org-type"/>
</dbReference>
<dbReference type="InterPro" id="IPR019926">
    <property type="entry name" value="Ribosomal_uL3_CS"/>
</dbReference>
<dbReference type="InterPro" id="IPR009000">
    <property type="entry name" value="Transl_B-barrel_sf"/>
</dbReference>
<dbReference type="NCBIfam" id="TIGR03625">
    <property type="entry name" value="L3_bact"/>
    <property type="match status" value="1"/>
</dbReference>
<dbReference type="PANTHER" id="PTHR11229">
    <property type="entry name" value="50S RIBOSOMAL PROTEIN L3"/>
    <property type="match status" value="1"/>
</dbReference>
<dbReference type="PANTHER" id="PTHR11229:SF16">
    <property type="entry name" value="LARGE RIBOSOMAL SUBUNIT PROTEIN UL3C"/>
    <property type="match status" value="1"/>
</dbReference>
<dbReference type="Pfam" id="PF00297">
    <property type="entry name" value="Ribosomal_L3"/>
    <property type="match status" value="1"/>
</dbReference>
<dbReference type="SUPFAM" id="SSF50447">
    <property type="entry name" value="Translation proteins"/>
    <property type="match status" value="1"/>
</dbReference>
<dbReference type="PROSITE" id="PS00474">
    <property type="entry name" value="RIBOSOMAL_L3"/>
    <property type="match status" value="1"/>
</dbReference>